<comment type="function">
    <text evidence="1">One of the components of the core complex of photosystem II (PSII). It binds chlorophyll and helps catalyze the primary light-induced photochemical processes of PSII. PSII is a light-driven water:plastoquinone oxidoreductase, using light energy to abstract electrons from H(2)O, generating O(2) and a proton gradient subsequently used for ATP formation.</text>
</comment>
<comment type="cofactor">
    <text evidence="1">Binds multiple chlorophylls and provides some of the ligands for the Ca-4Mn-5O cluster of the oxygen-evolving complex. It may also provide a ligand for a Cl- that is required for oxygen evolution. PSII binds additional chlorophylls, carotenoids and specific lipids.</text>
</comment>
<comment type="subunit">
    <text evidence="1">PSII is composed of 1 copy each of membrane proteins PsbA, PsbB, PsbC, PsbD, PsbE, PsbF, PsbH, PsbI, PsbJ, PsbK, PsbL, PsbM, PsbT, PsbX, PsbY, PsbZ, Psb30/Ycf12, at least 3 peripheral proteins of the oxygen-evolving complex and a large number of cofactors. It forms dimeric complexes.</text>
</comment>
<comment type="subcellular location">
    <subcellularLocation>
        <location evidence="1">Plastid</location>
        <location evidence="1">Chloroplast thylakoid membrane</location>
        <topology evidence="1">Multi-pass membrane protein</topology>
    </subcellularLocation>
</comment>
<comment type="similarity">
    <text evidence="1">Belongs to the PsbB/PsbC family. PsbC subfamily.</text>
</comment>
<feature type="propeptide" id="PRO_0000431146" evidence="1">
    <location>
        <begin position="1"/>
        <end position="14"/>
    </location>
</feature>
<feature type="chain" id="PRO_0000361385" description="Photosystem II CP43 reaction center protein" evidence="1">
    <location>
        <begin position="15"/>
        <end position="473"/>
    </location>
</feature>
<feature type="transmembrane region" description="Helical" evidence="1">
    <location>
        <begin position="69"/>
        <end position="93"/>
    </location>
</feature>
<feature type="transmembrane region" description="Helical" evidence="1">
    <location>
        <begin position="134"/>
        <end position="155"/>
    </location>
</feature>
<feature type="transmembrane region" description="Helical" evidence="1">
    <location>
        <begin position="178"/>
        <end position="200"/>
    </location>
</feature>
<feature type="transmembrane region" description="Helical" evidence="1">
    <location>
        <begin position="255"/>
        <end position="275"/>
    </location>
</feature>
<feature type="transmembrane region" description="Helical" evidence="1">
    <location>
        <begin position="291"/>
        <end position="312"/>
    </location>
</feature>
<feature type="transmembrane region" description="Helical" evidence="1">
    <location>
        <begin position="447"/>
        <end position="471"/>
    </location>
</feature>
<feature type="binding site" evidence="1">
    <location>
        <position position="367"/>
    </location>
    <ligand>
        <name>[CaMn4O5] cluster</name>
        <dbReference type="ChEBI" id="CHEBI:189552"/>
    </ligand>
</feature>
<feature type="modified residue" description="N-acetylthreonine" evidence="1">
    <location>
        <position position="15"/>
    </location>
</feature>
<feature type="modified residue" description="Phosphothreonine" evidence="1">
    <location>
        <position position="15"/>
    </location>
</feature>
<gene>
    <name evidence="1" type="primary">psbC</name>
</gene>
<geneLocation type="chloroplast"/>
<organism>
    <name type="scientific">Gnetum parvifolium</name>
    <name type="common">Small-leaved jointfir</name>
    <name type="synonym">Gnetum scandens var. parvifolium</name>
    <dbReference type="NCBI Taxonomy" id="33153"/>
    <lineage>
        <taxon>Eukaryota</taxon>
        <taxon>Viridiplantae</taxon>
        <taxon>Streptophyta</taxon>
        <taxon>Embryophyta</taxon>
        <taxon>Tracheophyta</taxon>
        <taxon>Spermatophyta</taxon>
        <taxon>Gnetopsida</taxon>
        <taxon>Gnetidae</taxon>
        <taxon>Gnetales</taxon>
        <taxon>Gnetaceae</taxon>
        <taxon>Gnetum</taxon>
    </lineage>
</organism>
<reference key="1">
    <citation type="journal article" date="2007" name="Mol. Biol. Evol.">
        <title>Chloroplast genome (cpDNA) of Cycas taitungensis and 56 cp protein-coding genes of Gnetum parvifolium: insights into cpDNA evolution and phylogeny of extant seed plants.</title>
        <authorList>
            <person name="Wu C.-S."/>
            <person name="Wang Y.-N."/>
            <person name="Liu S.-M."/>
            <person name="Chaw S.-M."/>
        </authorList>
    </citation>
    <scope>NUCLEOTIDE SEQUENCE [LARGE SCALE GENOMIC DNA]</scope>
</reference>
<reference key="2">
    <citation type="journal article" date="2009" name="Mol. Phylogenet. Evol.">
        <title>Evolution of reduced and compact chloroplast genomes (cpDNAs) in gnetophytes: Selection toward a lower-cost strategy.</title>
        <authorList>
            <person name="Wu C.-S."/>
            <person name="Lai Y.-T."/>
            <person name="Lin C.-P."/>
            <person name="Wang Y.-N."/>
            <person name="Chaw S.-M."/>
        </authorList>
    </citation>
    <scope>NUCLEOTIDE SEQUENCE [LARGE SCALE GENOMIC DNA]</scope>
</reference>
<keyword id="KW-0007">Acetylation</keyword>
<keyword id="KW-0148">Chlorophyll</keyword>
<keyword id="KW-0150">Chloroplast</keyword>
<keyword id="KW-0157">Chromophore</keyword>
<keyword id="KW-0464">Manganese</keyword>
<keyword id="KW-0472">Membrane</keyword>
<keyword id="KW-0479">Metal-binding</keyword>
<keyword id="KW-0597">Phosphoprotein</keyword>
<keyword id="KW-0602">Photosynthesis</keyword>
<keyword id="KW-0604">Photosystem II</keyword>
<keyword id="KW-0934">Plastid</keyword>
<keyword id="KW-0793">Thylakoid</keyword>
<keyword id="KW-0812">Transmembrane</keyword>
<keyword id="KW-1133">Transmembrane helix</keyword>
<sequence length="473" mass="52029">MKTLYSPRRFYPVETLFNGTLTLAGRDQETTGFAWWAGNARLINLSGKLLGAHVSHAGLIVFWAGSMNLFEVAHFIPEKPMYEQGLILLPHLATLGWGVGPGGEIVDTFPYFVSGVLHLISSAVLGFGGIYHALIGPETLEESFPFFGYTWKDRNKMTTILGIHLILLGAGAFLLVFKALFFGGIYDTWAPGGGDVRKITNLTLSPNIIFGYLLKSPFGGEGWIVSVDNLEDLIGGHFWLGSICIFGGIWHILTKPFAWTRRAFVWSGEAYLSYSLGALSVFGFIACCFVWFNNTAYPSEFYGPTGPEASQAQAFTFLVRDQRLGASVGSAQGPTGLGKYLMRSPTGEIIFGGETMRFWDLRAPWLEPLRGPNGLDLSKLKKDIQPWQERRSAEYMTHAPLGSLNSVGGVATEINAVNFVSPRSWLATSHFVLGFFFFVGHLWHAGRARAAAAGFEKGIDRDLEPVLFMTPLN</sequence>
<name>PSBC_GNEPA</name>
<evidence type="ECO:0000255" key="1">
    <source>
        <dbReference type="HAMAP-Rule" id="MF_01496"/>
    </source>
</evidence>
<dbReference type="EMBL" id="AB295926">
    <property type="protein sequence ID" value="BAF64875.1"/>
    <property type="molecule type" value="Genomic_DNA"/>
</dbReference>
<dbReference type="EMBL" id="AP009569">
    <property type="protein sequence ID" value="BAH11242.1"/>
    <property type="molecule type" value="Genomic_DNA"/>
</dbReference>
<dbReference type="RefSeq" id="YP_002519732.1">
    <property type="nucleotide sequence ID" value="NC_011942.1"/>
</dbReference>
<dbReference type="SMR" id="A6BM30"/>
<dbReference type="GeneID" id="7368168"/>
<dbReference type="GO" id="GO:0009535">
    <property type="term" value="C:chloroplast thylakoid membrane"/>
    <property type="evidence" value="ECO:0007669"/>
    <property type="project" value="UniProtKB-SubCell"/>
</dbReference>
<dbReference type="GO" id="GO:0009523">
    <property type="term" value="C:photosystem II"/>
    <property type="evidence" value="ECO:0007669"/>
    <property type="project" value="UniProtKB-KW"/>
</dbReference>
<dbReference type="GO" id="GO:0016168">
    <property type="term" value="F:chlorophyll binding"/>
    <property type="evidence" value="ECO:0007669"/>
    <property type="project" value="UniProtKB-UniRule"/>
</dbReference>
<dbReference type="GO" id="GO:0045156">
    <property type="term" value="F:electron transporter, transferring electrons within the cyclic electron transport pathway of photosynthesis activity"/>
    <property type="evidence" value="ECO:0007669"/>
    <property type="project" value="InterPro"/>
</dbReference>
<dbReference type="GO" id="GO:0046872">
    <property type="term" value="F:metal ion binding"/>
    <property type="evidence" value="ECO:0007669"/>
    <property type="project" value="UniProtKB-KW"/>
</dbReference>
<dbReference type="GO" id="GO:0009772">
    <property type="term" value="P:photosynthetic electron transport in photosystem II"/>
    <property type="evidence" value="ECO:0007669"/>
    <property type="project" value="InterPro"/>
</dbReference>
<dbReference type="FunFam" id="1.10.10.670:FF:000001">
    <property type="entry name" value="Photosystem II CP43 reaction center protein"/>
    <property type="match status" value="1"/>
</dbReference>
<dbReference type="Gene3D" id="1.10.10.670">
    <property type="entry name" value="photosystem ii from thermosynechococcus elongatus"/>
    <property type="match status" value="1"/>
</dbReference>
<dbReference type="HAMAP" id="MF_01496">
    <property type="entry name" value="PSII_PsbC_CP43"/>
    <property type="match status" value="1"/>
</dbReference>
<dbReference type="InterPro" id="IPR000932">
    <property type="entry name" value="PS_antenna-like"/>
</dbReference>
<dbReference type="InterPro" id="IPR036001">
    <property type="entry name" value="PS_II_antenna-like_sf"/>
</dbReference>
<dbReference type="InterPro" id="IPR005869">
    <property type="entry name" value="PSII_PsbC"/>
</dbReference>
<dbReference type="InterPro" id="IPR044900">
    <property type="entry name" value="PSII_PsbC_sf"/>
</dbReference>
<dbReference type="NCBIfam" id="TIGR01153">
    <property type="entry name" value="psbC"/>
    <property type="match status" value="1"/>
</dbReference>
<dbReference type="Pfam" id="PF00421">
    <property type="entry name" value="PSII"/>
    <property type="match status" value="1"/>
</dbReference>
<dbReference type="SUPFAM" id="SSF161077">
    <property type="entry name" value="Photosystem II antenna protein-like"/>
    <property type="match status" value="1"/>
</dbReference>
<proteinExistence type="inferred from homology"/>
<protein>
    <recommendedName>
        <fullName evidence="1">Photosystem II CP43 reaction center protein</fullName>
    </recommendedName>
    <alternativeName>
        <fullName evidence="1">PSII 43 kDa protein</fullName>
    </alternativeName>
    <alternativeName>
        <fullName evidence="1">Protein CP-43</fullName>
    </alternativeName>
</protein>
<accession>A6BM30</accession>
<accession>B7ZI62</accession>